<proteinExistence type="evidence at transcript level"/>
<reference key="1">
    <citation type="journal article" date="2004" name="DNA Res.">
        <title>Prediction of the coding sequences of mouse homologues of KIAA gene: IV. The complete nucleotide sequences of 500 mouse KIAA-homologous cDNAs identified by screening of terminal sequences of cDNA clones randomly sampled from size-fractionated libraries.</title>
        <authorList>
            <person name="Okazaki N."/>
            <person name="Kikuno R."/>
            <person name="Ohara R."/>
            <person name="Inamoto S."/>
            <person name="Koseki H."/>
            <person name="Hiraoka S."/>
            <person name="Saga Y."/>
            <person name="Seino S."/>
            <person name="Nishimura M."/>
            <person name="Kaisho T."/>
            <person name="Hoshino K."/>
            <person name="Kitamura H."/>
            <person name="Nagase T."/>
            <person name="Ohara O."/>
            <person name="Koga H."/>
        </authorList>
    </citation>
    <scope>NUCLEOTIDE SEQUENCE [LARGE SCALE MRNA]</scope>
    <source>
        <tissue>Brain</tissue>
    </source>
</reference>
<reference key="2">
    <citation type="journal article" date="2005" name="Science">
        <title>The transcriptional landscape of the mammalian genome.</title>
        <authorList>
            <person name="Carninci P."/>
            <person name="Kasukawa T."/>
            <person name="Katayama S."/>
            <person name="Gough J."/>
            <person name="Frith M.C."/>
            <person name="Maeda N."/>
            <person name="Oyama R."/>
            <person name="Ravasi T."/>
            <person name="Lenhard B."/>
            <person name="Wells C."/>
            <person name="Kodzius R."/>
            <person name="Shimokawa K."/>
            <person name="Bajic V.B."/>
            <person name="Brenner S.E."/>
            <person name="Batalov S."/>
            <person name="Forrest A.R."/>
            <person name="Zavolan M."/>
            <person name="Davis M.J."/>
            <person name="Wilming L.G."/>
            <person name="Aidinis V."/>
            <person name="Allen J.E."/>
            <person name="Ambesi-Impiombato A."/>
            <person name="Apweiler R."/>
            <person name="Aturaliya R.N."/>
            <person name="Bailey T.L."/>
            <person name="Bansal M."/>
            <person name="Baxter L."/>
            <person name="Beisel K.W."/>
            <person name="Bersano T."/>
            <person name="Bono H."/>
            <person name="Chalk A.M."/>
            <person name="Chiu K.P."/>
            <person name="Choudhary V."/>
            <person name="Christoffels A."/>
            <person name="Clutterbuck D.R."/>
            <person name="Crowe M.L."/>
            <person name="Dalla E."/>
            <person name="Dalrymple B.P."/>
            <person name="de Bono B."/>
            <person name="Della Gatta G."/>
            <person name="di Bernardo D."/>
            <person name="Down T."/>
            <person name="Engstrom P."/>
            <person name="Fagiolini M."/>
            <person name="Faulkner G."/>
            <person name="Fletcher C.F."/>
            <person name="Fukushima T."/>
            <person name="Furuno M."/>
            <person name="Futaki S."/>
            <person name="Gariboldi M."/>
            <person name="Georgii-Hemming P."/>
            <person name="Gingeras T.R."/>
            <person name="Gojobori T."/>
            <person name="Green R.E."/>
            <person name="Gustincich S."/>
            <person name="Harbers M."/>
            <person name="Hayashi Y."/>
            <person name="Hensch T.K."/>
            <person name="Hirokawa N."/>
            <person name="Hill D."/>
            <person name="Huminiecki L."/>
            <person name="Iacono M."/>
            <person name="Ikeo K."/>
            <person name="Iwama A."/>
            <person name="Ishikawa T."/>
            <person name="Jakt M."/>
            <person name="Kanapin A."/>
            <person name="Katoh M."/>
            <person name="Kawasawa Y."/>
            <person name="Kelso J."/>
            <person name="Kitamura H."/>
            <person name="Kitano H."/>
            <person name="Kollias G."/>
            <person name="Krishnan S.P."/>
            <person name="Kruger A."/>
            <person name="Kummerfeld S.K."/>
            <person name="Kurochkin I.V."/>
            <person name="Lareau L.F."/>
            <person name="Lazarevic D."/>
            <person name="Lipovich L."/>
            <person name="Liu J."/>
            <person name="Liuni S."/>
            <person name="McWilliam S."/>
            <person name="Madan Babu M."/>
            <person name="Madera M."/>
            <person name="Marchionni L."/>
            <person name="Matsuda H."/>
            <person name="Matsuzawa S."/>
            <person name="Miki H."/>
            <person name="Mignone F."/>
            <person name="Miyake S."/>
            <person name="Morris K."/>
            <person name="Mottagui-Tabar S."/>
            <person name="Mulder N."/>
            <person name="Nakano N."/>
            <person name="Nakauchi H."/>
            <person name="Ng P."/>
            <person name="Nilsson R."/>
            <person name="Nishiguchi S."/>
            <person name="Nishikawa S."/>
            <person name="Nori F."/>
            <person name="Ohara O."/>
            <person name="Okazaki Y."/>
            <person name="Orlando V."/>
            <person name="Pang K.C."/>
            <person name="Pavan W.J."/>
            <person name="Pavesi G."/>
            <person name="Pesole G."/>
            <person name="Petrovsky N."/>
            <person name="Piazza S."/>
            <person name="Reed J."/>
            <person name="Reid J.F."/>
            <person name="Ring B.Z."/>
            <person name="Ringwald M."/>
            <person name="Rost B."/>
            <person name="Ruan Y."/>
            <person name="Salzberg S.L."/>
            <person name="Sandelin A."/>
            <person name="Schneider C."/>
            <person name="Schoenbach C."/>
            <person name="Sekiguchi K."/>
            <person name="Semple C.A."/>
            <person name="Seno S."/>
            <person name="Sessa L."/>
            <person name="Sheng Y."/>
            <person name="Shibata Y."/>
            <person name="Shimada H."/>
            <person name="Shimada K."/>
            <person name="Silva D."/>
            <person name="Sinclair B."/>
            <person name="Sperling S."/>
            <person name="Stupka E."/>
            <person name="Sugiura K."/>
            <person name="Sultana R."/>
            <person name="Takenaka Y."/>
            <person name="Taki K."/>
            <person name="Tammoja K."/>
            <person name="Tan S.L."/>
            <person name="Tang S."/>
            <person name="Taylor M.S."/>
            <person name="Tegner J."/>
            <person name="Teichmann S.A."/>
            <person name="Ueda H.R."/>
            <person name="van Nimwegen E."/>
            <person name="Verardo R."/>
            <person name="Wei C.L."/>
            <person name="Yagi K."/>
            <person name="Yamanishi H."/>
            <person name="Zabarovsky E."/>
            <person name="Zhu S."/>
            <person name="Zimmer A."/>
            <person name="Hide W."/>
            <person name="Bult C."/>
            <person name="Grimmond S.M."/>
            <person name="Teasdale R.D."/>
            <person name="Liu E.T."/>
            <person name="Brusic V."/>
            <person name="Quackenbush J."/>
            <person name="Wahlestedt C."/>
            <person name="Mattick J.S."/>
            <person name="Hume D.A."/>
            <person name="Kai C."/>
            <person name="Sasaki D."/>
            <person name="Tomaru Y."/>
            <person name="Fukuda S."/>
            <person name="Kanamori-Katayama M."/>
            <person name="Suzuki M."/>
            <person name="Aoki J."/>
            <person name="Arakawa T."/>
            <person name="Iida J."/>
            <person name="Imamura K."/>
            <person name="Itoh M."/>
            <person name="Kato T."/>
            <person name="Kawaji H."/>
            <person name="Kawagashira N."/>
            <person name="Kawashima T."/>
            <person name="Kojima M."/>
            <person name="Kondo S."/>
            <person name="Konno H."/>
            <person name="Nakano K."/>
            <person name="Ninomiya N."/>
            <person name="Nishio T."/>
            <person name="Okada M."/>
            <person name="Plessy C."/>
            <person name="Shibata K."/>
            <person name="Shiraki T."/>
            <person name="Suzuki S."/>
            <person name="Tagami M."/>
            <person name="Waki K."/>
            <person name="Watahiki A."/>
            <person name="Okamura-Oho Y."/>
            <person name="Suzuki H."/>
            <person name="Kawai J."/>
            <person name="Hayashizaki Y."/>
        </authorList>
    </citation>
    <scope>NUCLEOTIDE SEQUENCE [LARGE SCALE MRNA]</scope>
    <source>
        <strain>C57BL/6J</strain>
    </source>
</reference>
<reference key="3">
    <citation type="journal article" date="2009" name="PLoS Biol.">
        <title>Lineage-specific biology revealed by a finished genome assembly of the mouse.</title>
        <authorList>
            <person name="Church D.M."/>
            <person name="Goodstadt L."/>
            <person name="Hillier L.W."/>
            <person name="Zody M.C."/>
            <person name="Goldstein S."/>
            <person name="She X."/>
            <person name="Bult C.J."/>
            <person name="Agarwala R."/>
            <person name="Cherry J.L."/>
            <person name="DiCuccio M."/>
            <person name="Hlavina W."/>
            <person name="Kapustin Y."/>
            <person name="Meric P."/>
            <person name="Maglott D."/>
            <person name="Birtle Z."/>
            <person name="Marques A.C."/>
            <person name="Graves T."/>
            <person name="Zhou S."/>
            <person name="Teague B."/>
            <person name="Potamousis K."/>
            <person name="Churas C."/>
            <person name="Place M."/>
            <person name="Herschleb J."/>
            <person name="Runnheim R."/>
            <person name="Forrest D."/>
            <person name="Amos-Landgraf J."/>
            <person name="Schwartz D.C."/>
            <person name="Cheng Z."/>
            <person name="Lindblad-Toh K."/>
            <person name="Eichler E.E."/>
            <person name="Ponting C.P."/>
        </authorList>
    </citation>
    <scope>NUCLEOTIDE SEQUENCE [LARGE SCALE GENOMIC DNA]</scope>
    <source>
        <strain>C57BL/6J</strain>
    </source>
</reference>
<reference key="4">
    <citation type="journal article" date="2016" name="Front. Cell Dev. Biol.">
        <title>Gene expression profiling of muscle stem cells identifies novel regulators of postnatal myogenesis.</title>
        <authorList>
            <person name="Alonso-Martin S."/>
            <person name="Rochat A."/>
            <person name="Mademtzoglou D."/>
            <person name="Morais J."/>
            <person name="de Reynies A."/>
            <person name="Aurade F."/>
            <person name="Chang T.H."/>
            <person name="Zammit P.S."/>
            <person name="Relaix F."/>
        </authorList>
    </citation>
    <scope>DEVELOPMENTAL STAGE</scope>
    <scope>TISSUE SPECIFICITY</scope>
</reference>
<organism>
    <name type="scientific">Mus musculus</name>
    <name type="common">Mouse</name>
    <dbReference type="NCBI Taxonomy" id="10090"/>
    <lineage>
        <taxon>Eukaryota</taxon>
        <taxon>Metazoa</taxon>
        <taxon>Chordata</taxon>
        <taxon>Craniata</taxon>
        <taxon>Vertebrata</taxon>
        <taxon>Euteleostomi</taxon>
        <taxon>Mammalia</taxon>
        <taxon>Eutheria</taxon>
        <taxon>Euarchontoglires</taxon>
        <taxon>Glires</taxon>
        <taxon>Rodentia</taxon>
        <taxon>Myomorpha</taxon>
        <taxon>Muroidea</taxon>
        <taxon>Muridae</taxon>
        <taxon>Murinae</taxon>
        <taxon>Mus</taxon>
        <taxon>Mus</taxon>
    </lineage>
</organism>
<sequence>MPPPAEVTDPSHAPAVLHQLNEQRLRGLFCDVTLIAGDTKFPAHRSVLAASSPFFREALLASAPLPLPPVTGGSAPSPATTTAASSSSSSPPPASPHSSSPPRVLELPGVPAAAFSDVLNFIYSARLALPGGGGDGAAVAEIGALGRRLGISRLQGLGEGGDTWVPPAPTSMVTSDPTEDGLGAGPRTDGEWVGDKAEALTPDSQPRRPFPCPRCGKSFIHPKRLQTHEAQCRRGSNTRGSAGLGPGVSGSGGPAGVDASALPQPVGFRDGPEHVVKVVGGHVLYVCAACERSYVTLSSLKRHSNVHSWRRKYPCRYCEKVFALAEYRTKHEVWHTGERRYQCIFCWDTFVTYYNLKTHQRAFHGISPGLLASEKTPNGGYKPRLNTLKLYRLLPMRAAKRPYKTYSQGAPEAPLSPSLHTPAPAAMPASPQPLPPPAPEPGPPPSVITFAHPAPSVIVHGSSSSGAAGGGPAGTGGSQAASVITYTTPPRPPKKREYPPPPPEPTATPTSPASTAVSPATAAGPATATEEAKGRNLRAGRTLTYTAKPVGGLSGSGGSPTGTGRGSSQLQAPPPLCQITVRIGEEAIVKRRISETDLRPGELSGEEVEESEEEEEEEEEEDQEEQEESKAGGEDQLWRPYYSYKPKRKAGATAGGASGVSGLPRGRRPPRWRQKLERRGWEETPSVEGPGGRGRGERRHRCGDCAQAFATVRKLRKHQEAHSGGSHTSRTGRRSSTRFTCPHCAKVCKTAAALNRHGQRHAVERPGGTPTPVIAYSKGSIGTRPTDVKEEAPQEMQVSSSSGEAGSGSAAAAEASESASLQDPVISGGEEPPVAGGGSYVYPPVQEFPLALIGGSREPSAGKGKPGNEGSLGASEGDRMEGMGTAKVTFYPEPYPLVYGPQLLAAYPYNFSNLAALPVALNMVLPDEKGGGALPFLPGVFGYAVNPQAAPPTPPPPLPLPVSPKGIGGMTGVERTQKGDVG</sequence>
<evidence type="ECO:0000250" key="1">
    <source>
        <dbReference type="UniProtKB" id="Q9P1Z0"/>
    </source>
</evidence>
<evidence type="ECO:0000255" key="2">
    <source>
        <dbReference type="PROSITE-ProRule" id="PRU00037"/>
    </source>
</evidence>
<evidence type="ECO:0000255" key="3">
    <source>
        <dbReference type="PROSITE-ProRule" id="PRU00042"/>
    </source>
</evidence>
<evidence type="ECO:0000256" key="4">
    <source>
        <dbReference type="SAM" id="MobiDB-lite"/>
    </source>
</evidence>
<evidence type="ECO:0000269" key="5">
    <source>
    </source>
</evidence>
<evidence type="ECO:0000305" key="6"/>
<protein>
    <recommendedName>
        <fullName>Zinc finger and BTB domain-containing protein 4</fullName>
    </recommendedName>
</protein>
<dbReference type="EMBL" id="AK147212">
    <property type="protein sequence ID" value="BAE27769.1"/>
    <property type="status" value="ALT_INIT"/>
    <property type="molecule type" value="mRNA"/>
</dbReference>
<dbReference type="EMBL" id="AK173196">
    <property type="protein sequence ID" value="BAD32474.1"/>
    <property type="molecule type" value="Transcribed_RNA"/>
</dbReference>
<dbReference type="EMBL" id="AL603707">
    <property type="status" value="NOT_ANNOTATED_CDS"/>
    <property type="molecule type" value="Genomic_DNA"/>
</dbReference>
<dbReference type="CCDS" id="CCDS36197.2"/>
<dbReference type="RefSeq" id="NP_001350107.1">
    <property type="nucleotide sequence ID" value="NM_001363178.1"/>
</dbReference>
<dbReference type="RefSeq" id="NP_083624.2">
    <property type="nucleotide sequence ID" value="NM_029348.2"/>
</dbReference>
<dbReference type="RefSeq" id="XP_006534452.1">
    <property type="nucleotide sequence ID" value="XM_006534389.4"/>
</dbReference>
<dbReference type="RefSeq" id="XP_006534453.1">
    <property type="nucleotide sequence ID" value="XM_006534390.4"/>
</dbReference>
<dbReference type="RefSeq" id="XP_006534454.1">
    <property type="nucleotide sequence ID" value="XM_006534391.5"/>
</dbReference>
<dbReference type="RefSeq" id="XP_006534455.1">
    <property type="nucleotide sequence ID" value="XM_006534392.3"/>
</dbReference>
<dbReference type="RefSeq" id="XP_006534456.1">
    <property type="nucleotide sequence ID" value="XM_006534393.5"/>
</dbReference>
<dbReference type="RefSeq" id="XP_006534457.1">
    <property type="nucleotide sequence ID" value="XM_006534394.5"/>
</dbReference>
<dbReference type="RefSeq" id="XP_011247595.1">
    <property type="nucleotide sequence ID" value="XM_011249293.3"/>
</dbReference>
<dbReference type="SMR" id="Q5F293"/>
<dbReference type="FunCoup" id="Q5F293">
    <property type="interactions" value="3859"/>
</dbReference>
<dbReference type="STRING" id="10090.ENSMUSP00000104279"/>
<dbReference type="GlyGen" id="Q5F293">
    <property type="glycosylation" value="2 sites"/>
</dbReference>
<dbReference type="iPTMnet" id="Q5F293"/>
<dbReference type="PhosphoSitePlus" id="Q5F293"/>
<dbReference type="PaxDb" id="10090-ENSMUSP00000104279"/>
<dbReference type="ProteomicsDB" id="275267"/>
<dbReference type="Antibodypedia" id="24133">
    <property type="antibodies" value="162 antibodies from 23 providers"/>
</dbReference>
<dbReference type="Ensembl" id="ENSMUST00000108639.8">
    <property type="protein sequence ID" value="ENSMUSP00000104279.2"/>
    <property type="gene ID" value="ENSMUSG00000018750.15"/>
</dbReference>
<dbReference type="Ensembl" id="ENSMUST00000108640.8">
    <property type="protein sequence ID" value="ENSMUSP00000104280.2"/>
    <property type="gene ID" value="ENSMUSG00000018750.15"/>
</dbReference>
<dbReference type="GeneID" id="75580"/>
<dbReference type="KEGG" id="mmu:75580"/>
<dbReference type="UCSC" id="uc007jrm.2">
    <property type="organism name" value="mouse"/>
</dbReference>
<dbReference type="AGR" id="MGI:1922830"/>
<dbReference type="CTD" id="57659"/>
<dbReference type="MGI" id="MGI:1922830">
    <property type="gene designation" value="Zbtb4"/>
</dbReference>
<dbReference type="VEuPathDB" id="HostDB:ENSMUSG00000018750"/>
<dbReference type="eggNOG" id="KOG1721">
    <property type="taxonomic scope" value="Eukaryota"/>
</dbReference>
<dbReference type="GeneTree" id="ENSGT00940000161268"/>
<dbReference type="HOGENOM" id="CLU_007011_1_0_1"/>
<dbReference type="InParanoid" id="Q5F293"/>
<dbReference type="OMA" id="VIAFAHP"/>
<dbReference type="OrthoDB" id="8922241at2759"/>
<dbReference type="PhylomeDB" id="Q5F293"/>
<dbReference type="TreeFam" id="TF333100"/>
<dbReference type="BioGRID-ORCS" id="75580">
    <property type="hits" value="4 hits in 78 CRISPR screens"/>
</dbReference>
<dbReference type="PRO" id="PR:Q5F293"/>
<dbReference type="Proteomes" id="UP000000589">
    <property type="component" value="Chromosome 11"/>
</dbReference>
<dbReference type="RNAct" id="Q5F293">
    <property type="molecule type" value="protein"/>
</dbReference>
<dbReference type="Bgee" id="ENSMUSG00000018750">
    <property type="expression patterns" value="Expressed in pineal body and 214 other cell types or tissues"/>
</dbReference>
<dbReference type="ExpressionAtlas" id="Q5F293">
    <property type="expression patterns" value="baseline and differential"/>
</dbReference>
<dbReference type="GO" id="GO:0005694">
    <property type="term" value="C:chromosome"/>
    <property type="evidence" value="ECO:0007669"/>
    <property type="project" value="UniProtKB-SubCell"/>
</dbReference>
<dbReference type="GO" id="GO:0005829">
    <property type="term" value="C:cytosol"/>
    <property type="evidence" value="ECO:0007669"/>
    <property type="project" value="Ensembl"/>
</dbReference>
<dbReference type="GO" id="GO:0016604">
    <property type="term" value="C:nuclear body"/>
    <property type="evidence" value="ECO:0007669"/>
    <property type="project" value="Ensembl"/>
</dbReference>
<dbReference type="GO" id="GO:0001227">
    <property type="term" value="F:DNA-binding transcription repressor activity, RNA polymerase II-specific"/>
    <property type="evidence" value="ECO:0007669"/>
    <property type="project" value="Ensembl"/>
</dbReference>
<dbReference type="GO" id="GO:0008327">
    <property type="term" value="F:methyl-CpG binding"/>
    <property type="evidence" value="ECO:0007669"/>
    <property type="project" value="Ensembl"/>
</dbReference>
<dbReference type="GO" id="GO:0010428">
    <property type="term" value="F:methyl-CpNpG binding"/>
    <property type="evidence" value="ECO:0007669"/>
    <property type="project" value="Ensembl"/>
</dbReference>
<dbReference type="GO" id="GO:0042803">
    <property type="term" value="F:protein homodimerization activity"/>
    <property type="evidence" value="ECO:0007669"/>
    <property type="project" value="Ensembl"/>
</dbReference>
<dbReference type="GO" id="GO:0019901">
    <property type="term" value="F:protein kinase binding"/>
    <property type="evidence" value="ECO:0007669"/>
    <property type="project" value="Ensembl"/>
</dbReference>
<dbReference type="GO" id="GO:0000977">
    <property type="term" value="F:RNA polymerase II transcription regulatory region sequence-specific DNA binding"/>
    <property type="evidence" value="ECO:0007669"/>
    <property type="project" value="Ensembl"/>
</dbReference>
<dbReference type="GO" id="GO:0008270">
    <property type="term" value="F:zinc ion binding"/>
    <property type="evidence" value="ECO:0007669"/>
    <property type="project" value="UniProtKB-KW"/>
</dbReference>
<dbReference type="GO" id="GO:0006974">
    <property type="term" value="P:DNA damage response"/>
    <property type="evidence" value="ECO:0007669"/>
    <property type="project" value="Ensembl"/>
</dbReference>
<dbReference type="CDD" id="cd18195">
    <property type="entry name" value="BTB_POZ_ZBTB4"/>
    <property type="match status" value="1"/>
</dbReference>
<dbReference type="FunFam" id="3.30.160.60:FF:000235">
    <property type="entry name" value="Zinc finger and BTB domain containing 38"/>
    <property type="match status" value="1"/>
</dbReference>
<dbReference type="FunFam" id="3.30.160.60:FF:000437">
    <property type="entry name" value="zinc finger and BTB domain-containing protein 38"/>
    <property type="match status" value="1"/>
</dbReference>
<dbReference type="FunFam" id="3.30.710.10:FF:000117">
    <property type="entry name" value="zinc finger and BTB domain-containing protein 4"/>
    <property type="match status" value="1"/>
</dbReference>
<dbReference type="Gene3D" id="3.30.160.60">
    <property type="entry name" value="Classic Zinc Finger"/>
    <property type="match status" value="4"/>
</dbReference>
<dbReference type="Gene3D" id="3.30.710.10">
    <property type="entry name" value="Potassium Channel Kv1.1, Chain A"/>
    <property type="match status" value="1"/>
</dbReference>
<dbReference type="InterPro" id="IPR000210">
    <property type="entry name" value="BTB/POZ_dom"/>
</dbReference>
<dbReference type="InterPro" id="IPR011333">
    <property type="entry name" value="SKP1/BTB/POZ_sf"/>
</dbReference>
<dbReference type="InterPro" id="IPR036236">
    <property type="entry name" value="Znf_C2H2_sf"/>
</dbReference>
<dbReference type="InterPro" id="IPR013087">
    <property type="entry name" value="Znf_C2H2_type"/>
</dbReference>
<dbReference type="InterPro" id="IPR050457">
    <property type="entry name" value="ZnFinger_BTB_dom_contain"/>
</dbReference>
<dbReference type="PANTHER" id="PTHR46105">
    <property type="entry name" value="AGAP004733-PA"/>
    <property type="match status" value="1"/>
</dbReference>
<dbReference type="PANTHER" id="PTHR46105:SF27">
    <property type="entry name" value="TRANSCRIPTIONAL REGULATOR KAISO"/>
    <property type="match status" value="1"/>
</dbReference>
<dbReference type="Pfam" id="PF00651">
    <property type="entry name" value="BTB"/>
    <property type="match status" value="1"/>
</dbReference>
<dbReference type="Pfam" id="PF00096">
    <property type="entry name" value="zf-C2H2"/>
    <property type="match status" value="2"/>
</dbReference>
<dbReference type="SMART" id="SM00225">
    <property type="entry name" value="BTB"/>
    <property type="match status" value="1"/>
</dbReference>
<dbReference type="SMART" id="SM00355">
    <property type="entry name" value="ZnF_C2H2"/>
    <property type="match status" value="6"/>
</dbReference>
<dbReference type="SUPFAM" id="SSF57667">
    <property type="entry name" value="beta-beta-alpha zinc fingers"/>
    <property type="match status" value="2"/>
</dbReference>
<dbReference type="SUPFAM" id="SSF54695">
    <property type="entry name" value="POZ domain"/>
    <property type="match status" value="1"/>
</dbReference>
<dbReference type="PROSITE" id="PS50097">
    <property type="entry name" value="BTB"/>
    <property type="match status" value="1"/>
</dbReference>
<dbReference type="PROSITE" id="PS00028">
    <property type="entry name" value="ZINC_FINGER_C2H2_1"/>
    <property type="match status" value="5"/>
</dbReference>
<dbReference type="PROSITE" id="PS50157">
    <property type="entry name" value="ZINC_FINGER_C2H2_2"/>
    <property type="match status" value="6"/>
</dbReference>
<feature type="chain" id="PRO_0000434408" description="Zinc finger and BTB domain-containing protein 4">
    <location>
        <begin position="1"/>
        <end position="982"/>
    </location>
</feature>
<feature type="domain" description="BTB" evidence="2">
    <location>
        <begin position="30"/>
        <end position="131"/>
    </location>
</feature>
<feature type="zinc finger region" description="C2H2-type 1; atypical" evidence="3">
    <location>
        <begin position="210"/>
        <end position="232"/>
    </location>
</feature>
<feature type="zinc finger region" description="C2H2-type 2" evidence="3">
    <location>
        <begin position="285"/>
        <end position="307"/>
    </location>
</feature>
<feature type="zinc finger region" description="C2H2-type 3" evidence="3">
    <location>
        <begin position="313"/>
        <end position="335"/>
    </location>
</feature>
<feature type="zinc finger region" description="C2H2-type 4" evidence="3">
    <location>
        <begin position="341"/>
        <end position="364"/>
    </location>
</feature>
<feature type="zinc finger region" description="C2H2-type 5" evidence="3">
    <location>
        <begin position="700"/>
        <end position="722"/>
    </location>
</feature>
<feature type="zinc finger region" description="C2H2-type 6" evidence="3">
    <location>
        <begin position="739"/>
        <end position="761"/>
    </location>
</feature>
<feature type="region of interest" description="Disordered" evidence="4">
    <location>
        <begin position="71"/>
        <end position="103"/>
    </location>
</feature>
<feature type="region of interest" description="Interaction with CBFA2T3" evidence="1">
    <location>
        <begin position="165"/>
        <end position="324"/>
    </location>
</feature>
<feature type="region of interest" description="Disordered" evidence="4">
    <location>
        <begin position="234"/>
        <end position="255"/>
    </location>
</feature>
<feature type="region of interest" description="Disordered" evidence="4">
    <location>
        <begin position="404"/>
        <end position="578"/>
    </location>
</feature>
<feature type="region of interest" description="Disordered" evidence="4">
    <location>
        <begin position="591"/>
        <end position="700"/>
    </location>
</feature>
<feature type="region of interest" description="Disordered" evidence="4">
    <location>
        <begin position="715"/>
        <end position="738"/>
    </location>
</feature>
<feature type="region of interest" description="Disordered" evidence="4">
    <location>
        <begin position="759"/>
        <end position="839"/>
    </location>
</feature>
<feature type="region of interest" description="Disordered" evidence="4">
    <location>
        <begin position="854"/>
        <end position="880"/>
    </location>
</feature>
<feature type="compositionally biased region" description="Low complexity" evidence="4">
    <location>
        <begin position="74"/>
        <end position="89"/>
    </location>
</feature>
<feature type="compositionally biased region" description="Gly residues" evidence="4">
    <location>
        <begin position="242"/>
        <end position="255"/>
    </location>
</feature>
<feature type="compositionally biased region" description="Pro residues" evidence="4">
    <location>
        <begin position="430"/>
        <end position="446"/>
    </location>
</feature>
<feature type="compositionally biased region" description="Gly residues" evidence="4">
    <location>
        <begin position="467"/>
        <end position="477"/>
    </location>
</feature>
<feature type="compositionally biased region" description="Low complexity" evidence="4">
    <location>
        <begin position="478"/>
        <end position="488"/>
    </location>
</feature>
<feature type="compositionally biased region" description="Low complexity" evidence="4">
    <location>
        <begin position="507"/>
        <end position="529"/>
    </location>
</feature>
<feature type="compositionally biased region" description="Gly residues" evidence="4">
    <location>
        <begin position="552"/>
        <end position="565"/>
    </location>
</feature>
<feature type="compositionally biased region" description="Basic and acidic residues" evidence="4">
    <location>
        <begin position="591"/>
        <end position="600"/>
    </location>
</feature>
<feature type="compositionally biased region" description="Acidic residues" evidence="4">
    <location>
        <begin position="604"/>
        <end position="627"/>
    </location>
</feature>
<feature type="compositionally biased region" description="Basic and acidic residues" evidence="4">
    <location>
        <begin position="628"/>
        <end position="637"/>
    </location>
</feature>
<feature type="compositionally biased region" description="Low complexity" evidence="4">
    <location>
        <begin position="799"/>
        <end position="820"/>
    </location>
</feature>
<feature type="modified residue" description="Phosphoserine" evidence="1">
    <location>
        <position position="367"/>
    </location>
</feature>
<feature type="modified residue" description="Phosphothreonine; by HIPK2" evidence="1">
    <location>
        <position position="769"/>
    </location>
</feature>
<feature type="modified residue" description="Phosphothreonine; by HIPK2" evidence="1">
    <location>
        <position position="771"/>
    </location>
</feature>
<feature type="modified residue" description="Phosphothreonine; by HIPK2" evidence="1">
    <location>
        <position position="953"/>
    </location>
</feature>
<feature type="cross-link" description="Glycyl lysine isopeptide (Lys-Gly) (interchain with G-Cter in SUMO2)" evidence="1">
    <location>
        <position position="40"/>
    </location>
</feature>
<feature type="cross-link" description="Glycyl lysine isopeptide (Lys-Gly) (interchain with G-Cter in SUMO2)" evidence="1">
    <location>
        <position position="548"/>
    </location>
</feature>
<feature type="cross-link" description="Glycyl lysine isopeptide (Lys-Gly) (interchain with G-Cter in SUMO2)" evidence="1">
    <location>
        <position position="590"/>
    </location>
</feature>
<feature type="sequence conflict" description="In Ref. 2; BAE27769." evidence="6" ref="2">
    <original>I</original>
    <variation>T</variation>
    <location>
        <position position="588"/>
    </location>
</feature>
<name>ZBTB4_MOUSE</name>
<accession>Q5F293</accession>
<accession>Q3UHT8</accession>
<accession>Q69ZH0</accession>
<gene>
    <name type="primary">Zbtb4</name>
    <name type="synonym">Kiaa1538</name>
</gene>
<comment type="function">
    <text evidence="1 5">Transcriptional repressor with bimodal DNA-binding specificity. Represses transcription in a methyl-CpG-dependent manner. Binds with a higher affinity to methylated CpG dinucleotides in the consensus sequence 5'-CGCG-3' but can also bind to the non-methylated consensus sequence 5'-CTGCNA-3' also known as the consensus kaiso binding site (KBS). Can also bind specifically to a single methyl-CpG pair and can bind hemimethylated DNA but with a lower affinity compared to methylated DNA. Plays a role in postnatal myogenesis, may be involved in the regulation of satellite cells self-renewal (PubMed:27446912).</text>
</comment>
<comment type="subunit">
    <text evidence="1">Interacts with HIPK2. Interacts with CBFA2T3. Interacts with ZBTB38.</text>
</comment>
<comment type="subcellular location">
    <subcellularLocation>
        <location evidence="1">Nucleus</location>
    </subcellularLocation>
    <subcellularLocation>
        <location evidence="1">Chromosome</location>
    </subcellularLocation>
    <text evidence="1">Localizes to chromocenters.</text>
</comment>
<comment type="tissue specificity">
    <text evidence="5">Expressed in adult and aged myogenic satellite cells.</text>
</comment>
<comment type="developmental stage">
    <text evidence="5">Not expressed during development, is induced during establishment of satellite cells and acquisition of quiescence.</text>
</comment>
<comment type="PTM">
    <text evidence="1">Phosphorylated by HIPK2. This phosphorylation reduces stability and triggers ZBTB4 protein degradation in response to DNA damage.</text>
</comment>
<comment type="sequence caution" evidence="6">
    <conflict type="erroneous initiation">
        <sequence resource="EMBL-CDS" id="BAE27769"/>
    </conflict>
    <text>Extended N-terminus.</text>
</comment>
<keyword id="KW-0158">Chromosome</keyword>
<keyword id="KW-0175">Coiled coil</keyword>
<keyword id="KW-0238">DNA-binding</keyword>
<keyword id="KW-1017">Isopeptide bond</keyword>
<keyword id="KW-0479">Metal-binding</keyword>
<keyword id="KW-0539">Nucleus</keyword>
<keyword id="KW-0597">Phosphoprotein</keyword>
<keyword id="KW-1185">Reference proteome</keyword>
<keyword id="KW-0677">Repeat</keyword>
<keyword id="KW-0678">Repressor</keyword>
<keyword id="KW-0804">Transcription</keyword>
<keyword id="KW-0805">Transcription regulation</keyword>
<keyword id="KW-0832">Ubl conjugation</keyword>
<keyword id="KW-0862">Zinc</keyword>
<keyword id="KW-0863">Zinc-finger</keyword>